<sequence length="365" mass="38655">MGELRRSPLHERHVELGAKTAAFGGWEMPIEYAGRGVLAEHAAVRGAVGIFDVSHLGKARVAGPGAAEFVNTCLTNDLRRVGPGQAQYTLCCDETGGVVDDLIAYYYAVDNVFLVPNAANTAEVVRRLAAQAPAGVAVTDLHTEFAVLAVQGPAAPEVLRKLGLPADGAYMSFADAEWKGRPVIVCRSGYTGEAGFELLPRWADAVPLWDELLTVVTGLGGLPCGLGARDTLRTEMGYPLHGQDLSLSISPVQARSGWAVGWDKPAFWGREALLAERAAGPARSLWGLRSNDRGIPRPHMRVSGPDGAELGEVTSGTFSPTLRQGIGLALLDRSVTAGDEVAVDVRGRVSTMTVVRPPFVSASPR</sequence>
<gene>
    <name evidence="1" type="primary">gcvT</name>
    <name type="ordered locus">Franean1_1782</name>
</gene>
<name>GCST_PARS2</name>
<keyword id="KW-0032">Aminotransferase</keyword>
<keyword id="KW-0808">Transferase</keyword>
<reference key="1">
    <citation type="journal article" date="2007" name="Genome Res.">
        <title>Genome characteristics of facultatively symbiotic Frankia sp. strains reflect host range and host plant biogeography.</title>
        <authorList>
            <person name="Normand P."/>
            <person name="Lapierre P."/>
            <person name="Tisa L.S."/>
            <person name="Gogarten J.P."/>
            <person name="Alloisio N."/>
            <person name="Bagnarol E."/>
            <person name="Bassi C.A."/>
            <person name="Berry A.M."/>
            <person name="Bickhart D.M."/>
            <person name="Choisne N."/>
            <person name="Couloux A."/>
            <person name="Cournoyer B."/>
            <person name="Cruveiller S."/>
            <person name="Daubin V."/>
            <person name="Demange N."/>
            <person name="Francino M.P."/>
            <person name="Goltsman E."/>
            <person name="Huang Y."/>
            <person name="Kopp O.R."/>
            <person name="Labarre L."/>
            <person name="Lapidus A."/>
            <person name="Lavire C."/>
            <person name="Marechal J."/>
            <person name="Martinez M."/>
            <person name="Mastronunzio J.E."/>
            <person name="Mullin B.C."/>
            <person name="Niemann J."/>
            <person name="Pujic P."/>
            <person name="Rawnsley T."/>
            <person name="Rouy Z."/>
            <person name="Schenowitz C."/>
            <person name="Sellstedt A."/>
            <person name="Tavares F."/>
            <person name="Tomkins J.P."/>
            <person name="Vallenet D."/>
            <person name="Valverde C."/>
            <person name="Wall L.G."/>
            <person name="Wang Y."/>
            <person name="Medigue C."/>
            <person name="Benson D.R."/>
        </authorList>
    </citation>
    <scope>NUCLEOTIDE SEQUENCE [LARGE SCALE GENOMIC DNA]</scope>
    <source>
        <strain>EAN1pec</strain>
    </source>
</reference>
<evidence type="ECO:0000255" key="1">
    <source>
        <dbReference type="HAMAP-Rule" id="MF_00259"/>
    </source>
</evidence>
<proteinExistence type="inferred from homology"/>
<dbReference type="EC" id="2.1.2.10" evidence="1"/>
<dbReference type="EMBL" id="CP000820">
    <property type="protein sequence ID" value="ABW11220.1"/>
    <property type="molecule type" value="Genomic_DNA"/>
</dbReference>
<dbReference type="RefSeq" id="WP_020459391.1">
    <property type="nucleotide sequence ID" value="NC_009921.1"/>
</dbReference>
<dbReference type="SMR" id="A8LFB7"/>
<dbReference type="STRING" id="298653.Franean1_1782"/>
<dbReference type="KEGG" id="fre:Franean1_1782"/>
<dbReference type="eggNOG" id="COG0404">
    <property type="taxonomic scope" value="Bacteria"/>
</dbReference>
<dbReference type="HOGENOM" id="CLU_007884_10_2_11"/>
<dbReference type="GO" id="GO:0005829">
    <property type="term" value="C:cytosol"/>
    <property type="evidence" value="ECO:0007669"/>
    <property type="project" value="TreeGrafter"/>
</dbReference>
<dbReference type="GO" id="GO:0005960">
    <property type="term" value="C:glycine cleavage complex"/>
    <property type="evidence" value="ECO:0007669"/>
    <property type="project" value="InterPro"/>
</dbReference>
<dbReference type="GO" id="GO:0004047">
    <property type="term" value="F:aminomethyltransferase activity"/>
    <property type="evidence" value="ECO:0007669"/>
    <property type="project" value="UniProtKB-UniRule"/>
</dbReference>
<dbReference type="GO" id="GO:0008483">
    <property type="term" value="F:transaminase activity"/>
    <property type="evidence" value="ECO:0007669"/>
    <property type="project" value="UniProtKB-KW"/>
</dbReference>
<dbReference type="GO" id="GO:0019464">
    <property type="term" value="P:glycine decarboxylation via glycine cleavage system"/>
    <property type="evidence" value="ECO:0007669"/>
    <property type="project" value="UniProtKB-UniRule"/>
</dbReference>
<dbReference type="Gene3D" id="3.30.1360.120">
    <property type="entry name" value="Probable tRNA modification gtpase trme, domain 1"/>
    <property type="match status" value="1"/>
</dbReference>
<dbReference type="HAMAP" id="MF_00259">
    <property type="entry name" value="GcvT"/>
    <property type="match status" value="1"/>
</dbReference>
<dbReference type="InterPro" id="IPR006223">
    <property type="entry name" value="GCS_T"/>
</dbReference>
<dbReference type="InterPro" id="IPR022903">
    <property type="entry name" value="GCS_T_bac"/>
</dbReference>
<dbReference type="InterPro" id="IPR013977">
    <property type="entry name" value="GCST_C"/>
</dbReference>
<dbReference type="InterPro" id="IPR006222">
    <property type="entry name" value="GCV_T_N"/>
</dbReference>
<dbReference type="InterPro" id="IPR028896">
    <property type="entry name" value="GcvT/YgfZ/DmdA"/>
</dbReference>
<dbReference type="InterPro" id="IPR029043">
    <property type="entry name" value="GcvT/YgfZ_C"/>
</dbReference>
<dbReference type="InterPro" id="IPR027266">
    <property type="entry name" value="TrmE/GcvT_dom1"/>
</dbReference>
<dbReference type="NCBIfam" id="TIGR00528">
    <property type="entry name" value="gcvT"/>
    <property type="match status" value="1"/>
</dbReference>
<dbReference type="NCBIfam" id="NF001567">
    <property type="entry name" value="PRK00389.1"/>
    <property type="match status" value="1"/>
</dbReference>
<dbReference type="PANTHER" id="PTHR43757">
    <property type="entry name" value="AMINOMETHYLTRANSFERASE"/>
    <property type="match status" value="1"/>
</dbReference>
<dbReference type="PANTHER" id="PTHR43757:SF2">
    <property type="entry name" value="AMINOMETHYLTRANSFERASE, MITOCHONDRIAL"/>
    <property type="match status" value="1"/>
</dbReference>
<dbReference type="Pfam" id="PF01571">
    <property type="entry name" value="GCV_T"/>
    <property type="match status" value="1"/>
</dbReference>
<dbReference type="Pfam" id="PF08669">
    <property type="entry name" value="GCV_T_C"/>
    <property type="match status" value="1"/>
</dbReference>
<dbReference type="PIRSF" id="PIRSF006487">
    <property type="entry name" value="GcvT"/>
    <property type="match status" value="1"/>
</dbReference>
<dbReference type="SUPFAM" id="SSF101790">
    <property type="entry name" value="Aminomethyltransferase beta-barrel domain"/>
    <property type="match status" value="1"/>
</dbReference>
<dbReference type="SUPFAM" id="SSF103025">
    <property type="entry name" value="Folate-binding domain"/>
    <property type="match status" value="1"/>
</dbReference>
<comment type="function">
    <text evidence="1">The glycine cleavage system catalyzes the degradation of glycine.</text>
</comment>
<comment type="catalytic activity">
    <reaction evidence="1">
        <text>N(6)-[(R)-S(8)-aminomethyldihydrolipoyl]-L-lysyl-[protein] + (6S)-5,6,7,8-tetrahydrofolate = N(6)-[(R)-dihydrolipoyl]-L-lysyl-[protein] + (6R)-5,10-methylene-5,6,7,8-tetrahydrofolate + NH4(+)</text>
        <dbReference type="Rhea" id="RHEA:16945"/>
        <dbReference type="Rhea" id="RHEA-COMP:10475"/>
        <dbReference type="Rhea" id="RHEA-COMP:10492"/>
        <dbReference type="ChEBI" id="CHEBI:15636"/>
        <dbReference type="ChEBI" id="CHEBI:28938"/>
        <dbReference type="ChEBI" id="CHEBI:57453"/>
        <dbReference type="ChEBI" id="CHEBI:83100"/>
        <dbReference type="ChEBI" id="CHEBI:83143"/>
        <dbReference type="EC" id="2.1.2.10"/>
    </reaction>
</comment>
<comment type="subunit">
    <text evidence="1">The glycine cleavage system is composed of four proteins: P, T, L and H.</text>
</comment>
<comment type="similarity">
    <text evidence="1">Belongs to the GcvT family.</text>
</comment>
<protein>
    <recommendedName>
        <fullName evidence="1">Aminomethyltransferase</fullName>
        <ecNumber evidence="1">2.1.2.10</ecNumber>
    </recommendedName>
    <alternativeName>
        <fullName evidence="1">Glycine cleavage system T protein</fullName>
    </alternativeName>
</protein>
<organism>
    <name type="scientific">Parafrankia sp. (strain EAN1pec)</name>
    <dbReference type="NCBI Taxonomy" id="298653"/>
    <lineage>
        <taxon>Bacteria</taxon>
        <taxon>Bacillati</taxon>
        <taxon>Actinomycetota</taxon>
        <taxon>Actinomycetes</taxon>
        <taxon>Frankiales</taxon>
        <taxon>Frankiaceae</taxon>
        <taxon>Parafrankia</taxon>
    </lineage>
</organism>
<accession>A8LFB7</accession>
<feature type="chain" id="PRO_1000114096" description="Aminomethyltransferase">
    <location>
        <begin position="1"/>
        <end position="365"/>
    </location>
</feature>